<comment type="function">
    <text evidence="1">Involved in transcription antitermination. Required for transcription of ribosomal RNA (rRNA) genes. Binds specifically to the boxA antiterminator sequence of the ribosomal RNA (rrn) operons.</text>
</comment>
<comment type="similarity">
    <text evidence="1">Belongs to the NusB family.</text>
</comment>
<keyword id="KW-0694">RNA-binding</keyword>
<keyword id="KW-0804">Transcription</keyword>
<keyword id="KW-0889">Transcription antitermination</keyword>
<keyword id="KW-0805">Transcription regulation</keyword>
<evidence type="ECO:0000255" key="1">
    <source>
        <dbReference type="HAMAP-Rule" id="MF_00073"/>
    </source>
</evidence>
<gene>
    <name evidence="1" type="primary">nusB</name>
    <name type="ordered locus">Acid_6222</name>
</gene>
<sequence>MASRRRARQRALQILFIWDARKQPVEDAINAYYDTLYSDEKPERDPFVIDLVRGTVEHLAEVDDRITRHAEHWRMERMPAVDRNILRLAVYEMTRGGTPAPVTIDEALELARKFSNEESVQFVNGVLDAVRREMPEPNAPPARLNS</sequence>
<accession>Q01T72</accession>
<proteinExistence type="inferred from homology"/>
<feature type="chain" id="PRO_1000192456" description="Transcription antitermination protein NusB">
    <location>
        <begin position="1"/>
        <end position="146"/>
    </location>
</feature>
<reference key="1">
    <citation type="journal article" date="2009" name="Appl. Environ. Microbiol.">
        <title>Three genomes from the phylum Acidobacteria provide insight into the lifestyles of these microorganisms in soils.</title>
        <authorList>
            <person name="Ward N.L."/>
            <person name="Challacombe J.F."/>
            <person name="Janssen P.H."/>
            <person name="Henrissat B."/>
            <person name="Coutinho P.M."/>
            <person name="Wu M."/>
            <person name="Xie G."/>
            <person name="Haft D.H."/>
            <person name="Sait M."/>
            <person name="Badger J."/>
            <person name="Barabote R.D."/>
            <person name="Bradley B."/>
            <person name="Brettin T.S."/>
            <person name="Brinkac L.M."/>
            <person name="Bruce D."/>
            <person name="Creasy T."/>
            <person name="Daugherty S.C."/>
            <person name="Davidsen T.M."/>
            <person name="DeBoy R.T."/>
            <person name="Detter J.C."/>
            <person name="Dodson R.J."/>
            <person name="Durkin A.S."/>
            <person name="Ganapathy A."/>
            <person name="Gwinn-Giglio M."/>
            <person name="Han C.S."/>
            <person name="Khouri H."/>
            <person name="Kiss H."/>
            <person name="Kothari S.P."/>
            <person name="Madupu R."/>
            <person name="Nelson K.E."/>
            <person name="Nelson W.C."/>
            <person name="Paulsen I."/>
            <person name="Penn K."/>
            <person name="Ren Q."/>
            <person name="Rosovitz M.J."/>
            <person name="Selengut J.D."/>
            <person name="Shrivastava S."/>
            <person name="Sullivan S.A."/>
            <person name="Tapia R."/>
            <person name="Thompson L.S."/>
            <person name="Watkins K.L."/>
            <person name="Yang Q."/>
            <person name="Yu C."/>
            <person name="Zafar N."/>
            <person name="Zhou L."/>
            <person name="Kuske C.R."/>
        </authorList>
    </citation>
    <scope>NUCLEOTIDE SEQUENCE [LARGE SCALE GENOMIC DNA]</scope>
    <source>
        <strain>Ellin6076</strain>
    </source>
</reference>
<name>NUSB_SOLUE</name>
<dbReference type="EMBL" id="CP000473">
    <property type="protein sequence ID" value="ABJ87148.1"/>
    <property type="molecule type" value="Genomic_DNA"/>
</dbReference>
<dbReference type="SMR" id="Q01T72"/>
<dbReference type="FunCoup" id="Q01T72">
    <property type="interactions" value="398"/>
</dbReference>
<dbReference type="STRING" id="234267.Acid_6222"/>
<dbReference type="KEGG" id="sus:Acid_6222"/>
<dbReference type="eggNOG" id="COG0781">
    <property type="taxonomic scope" value="Bacteria"/>
</dbReference>
<dbReference type="HOGENOM" id="CLU_087843_3_3_0"/>
<dbReference type="InParanoid" id="Q01T72"/>
<dbReference type="OrthoDB" id="9811381at2"/>
<dbReference type="GO" id="GO:0005829">
    <property type="term" value="C:cytosol"/>
    <property type="evidence" value="ECO:0007669"/>
    <property type="project" value="TreeGrafter"/>
</dbReference>
<dbReference type="GO" id="GO:0003723">
    <property type="term" value="F:RNA binding"/>
    <property type="evidence" value="ECO:0007669"/>
    <property type="project" value="UniProtKB-UniRule"/>
</dbReference>
<dbReference type="GO" id="GO:0006353">
    <property type="term" value="P:DNA-templated transcription termination"/>
    <property type="evidence" value="ECO:0007669"/>
    <property type="project" value="UniProtKB-UniRule"/>
</dbReference>
<dbReference type="GO" id="GO:0031564">
    <property type="term" value="P:transcription antitermination"/>
    <property type="evidence" value="ECO:0007669"/>
    <property type="project" value="UniProtKB-KW"/>
</dbReference>
<dbReference type="Gene3D" id="1.10.940.10">
    <property type="entry name" value="NusB-like"/>
    <property type="match status" value="1"/>
</dbReference>
<dbReference type="HAMAP" id="MF_00073">
    <property type="entry name" value="NusB"/>
    <property type="match status" value="1"/>
</dbReference>
<dbReference type="InterPro" id="IPR035926">
    <property type="entry name" value="NusB-like_sf"/>
</dbReference>
<dbReference type="InterPro" id="IPR011605">
    <property type="entry name" value="NusB_fam"/>
</dbReference>
<dbReference type="InterPro" id="IPR006027">
    <property type="entry name" value="NusB_RsmB_TIM44"/>
</dbReference>
<dbReference type="NCBIfam" id="TIGR01951">
    <property type="entry name" value="nusB"/>
    <property type="match status" value="1"/>
</dbReference>
<dbReference type="PANTHER" id="PTHR11078:SF3">
    <property type="entry name" value="ANTITERMINATION NUSB DOMAIN-CONTAINING PROTEIN"/>
    <property type="match status" value="1"/>
</dbReference>
<dbReference type="PANTHER" id="PTHR11078">
    <property type="entry name" value="N UTILIZATION SUBSTANCE PROTEIN B-RELATED"/>
    <property type="match status" value="1"/>
</dbReference>
<dbReference type="Pfam" id="PF01029">
    <property type="entry name" value="NusB"/>
    <property type="match status" value="1"/>
</dbReference>
<dbReference type="SUPFAM" id="SSF48013">
    <property type="entry name" value="NusB-like"/>
    <property type="match status" value="1"/>
</dbReference>
<protein>
    <recommendedName>
        <fullName evidence="1">Transcription antitermination protein NusB</fullName>
    </recommendedName>
    <alternativeName>
        <fullName evidence="1">Antitermination factor NusB</fullName>
    </alternativeName>
</protein>
<organism>
    <name type="scientific">Solibacter usitatus (strain Ellin6076)</name>
    <dbReference type="NCBI Taxonomy" id="234267"/>
    <lineage>
        <taxon>Bacteria</taxon>
        <taxon>Pseudomonadati</taxon>
        <taxon>Acidobacteriota</taxon>
        <taxon>Terriglobia</taxon>
        <taxon>Bryobacterales</taxon>
        <taxon>Solibacteraceae</taxon>
        <taxon>Candidatus Solibacter</taxon>
    </lineage>
</organism>